<evidence type="ECO:0000255" key="1">
    <source>
        <dbReference type="HAMAP-Rule" id="MF_00815"/>
    </source>
</evidence>
<gene>
    <name evidence="1" type="primary">atpG</name>
    <name type="ordered locus">Tfu_2408</name>
</gene>
<comment type="function">
    <text evidence="1">Produces ATP from ADP in the presence of a proton gradient across the membrane. The gamma chain is believed to be important in regulating ATPase activity and the flow of protons through the CF(0) complex.</text>
</comment>
<comment type="subunit">
    <text evidence="1">F-type ATPases have 2 components, CF(1) - the catalytic core - and CF(0) - the membrane proton channel. CF(1) has five subunits: alpha(3), beta(3), gamma(1), delta(1), epsilon(1). CF(0) has three main subunits: a, b and c.</text>
</comment>
<comment type="subcellular location">
    <subcellularLocation>
        <location evidence="1">Cell membrane</location>
        <topology evidence="1">Peripheral membrane protein</topology>
    </subcellularLocation>
</comment>
<comment type="similarity">
    <text evidence="1">Belongs to the ATPase gamma chain family.</text>
</comment>
<protein>
    <recommendedName>
        <fullName evidence="1">ATP synthase gamma chain</fullName>
    </recommendedName>
    <alternativeName>
        <fullName evidence="1">ATP synthase F1 sector gamma subunit</fullName>
    </alternativeName>
    <alternativeName>
        <fullName evidence="1">F-ATPase gamma subunit</fullName>
    </alternativeName>
</protein>
<sequence length="304" mass="33328">MGAQLRVYRRRIRSTKSMAKITRAMELIAATRITKAQRAAEAAAPYAREITRAVSAVAARVSDHPLLTEAENPTRAAVLVITSDKGLAGAYTANAIKEAERLTALLNEQGKEVLTYMVGRKGIGFYKFRERPLADSWEGFTERPSYMHAMEISSALMEKFIQETAEGGVDEIHIVSTEFISMINQRARASRILPLEVEEVDSKVLEAEQGPLPLYEFEPGAEEVLDQLLPKYVTNRIYFALLESAASQHASRRAAMKAATDNAEELVKTLTRQANQARQAEITNEISEIVGGADALAAASAGSE</sequence>
<keyword id="KW-0066">ATP synthesis</keyword>
<keyword id="KW-1003">Cell membrane</keyword>
<keyword id="KW-0139">CF(1)</keyword>
<keyword id="KW-0375">Hydrogen ion transport</keyword>
<keyword id="KW-0406">Ion transport</keyword>
<keyword id="KW-0472">Membrane</keyword>
<keyword id="KW-0813">Transport</keyword>
<proteinExistence type="inferred from homology"/>
<organism>
    <name type="scientific">Thermobifida fusca (strain YX)</name>
    <dbReference type="NCBI Taxonomy" id="269800"/>
    <lineage>
        <taxon>Bacteria</taxon>
        <taxon>Bacillati</taxon>
        <taxon>Actinomycetota</taxon>
        <taxon>Actinomycetes</taxon>
        <taxon>Streptosporangiales</taxon>
        <taxon>Nocardiopsidaceae</taxon>
        <taxon>Thermobifida</taxon>
    </lineage>
</organism>
<accession>Q47M81</accession>
<feature type="chain" id="PRO_1000053369" description="ATP synthase gamma chain">
    <location>
        <begin position="1"/>
        <end position="304"/>
    </location>
</feature>
<reference key="1">
    <citation type="journal article" date="2007" name="J. Bacteriol.">
        <title>Genome sequence and analysis of the soil cellulolytic actinomycete Thermobifida fusca YX.</title>
        <authorList>
            <person name="Lykidis A."/>
            <person name="Mavromatis K."/>
            <person name="Ivanova N."/>
            <person name="Anderson I."/>
            <person name="Land M."/>
            <person name="DiBartolo G."/>
            <person name="Martinez M."/>
            <person name="Lapidus A."/>
            <person name="Lucas S."/>
            <person name="Copeland A."/>
            <person name="Richardson P."/>
            <person name="Wilson D.B."/>
            <person name="Kyrpides N."/>
        </authorList>
    </citation>
    <scope>NUCLEOTIDE SEQUENCE [LARGE SCALE GENOMIC DNA]</scope>
    <source>
        <strain>YX</strain>
    </source>
</reference>
<name>ATPG_THEFY</name>
<dbReference type="EMBL" id="CP000088">
    <property type="protein sequence ID" value="AAZ56441.1"/>
    <property type="molecule type" value="Genomic_DNA"/>
</dbReference>
<dbReference type="RefSeq" id="WP_011292831.1">
    <property type="nucleotide sequence ID" value="NC_007333.1"/>
</dbReference>
<dbReference type="SMR" id="Q47M81"/>
<dbReference type="STRING" id="269800.Tfu_2408"/>
<dbReference type="KEGG" id="tfu:Tfu_2408"/>
<dbReference type="eggNOG" id="COG0224">
    <property type="taxonomic scope" value="Bacteria"/>
</dbReference>
<dbReference type="HOGENOM" id="CLU_050669_0_0_11"/>
<dbReference type="OrthoDB" id="9812769at2"/>
<dbReference type="GO" id="GO:0005886">
    <property type="term" value="C:plasma membrane"/>
    <property type="evidence" value="ECO:0007669"/>
    <property type="project" value="UniProtKB-SubCell"/>
</dbReference>
<dbReference type="GO" id="GO:0045259">
    <property type="term" value="C:proton-transporting ATP synthase complex"/>
    <property type="evidence" value="ECO:0007669"/>
    <property type="project" value="UniProtKB-KW"/>
</dbReference>
<dbReference type="GO" id="GO:0005524">
    <property type="term" value="F:ATP binding"/>
    <property type="evidence" value="ECO:0007669"/>
    <property type="project" value="UniProtKB-UniRule"/>
</dbReference>
<dbReference type="GO" id="GO:0046933">
    <property type="term" value="F:proton-transporting ATP synthase activity, rotational mechanism"/>
    <property type="evidence" value="ECO:0007669"/>
    <property type="project" value="UniProtKB-UniRule"/>
</dbReference>
<dbReference type="GO" id="GO:0042777">
    <property type="term" value="P:proton motive force-driven plasma membrane ATP synthesis"/>
    <property type="evidence" value="ECO:0007669"/>
    <property type="project" value="UniProtKB-UniRule"/>
</dbReference>
<dbReference type="CDD" id="cd12151">
    <property type="entry name" value="F1-ATPase_gamma"/>
    <property type="match status" value="1"/>
</dbReference>
<dbReference type="Gene3D" id="3.40.1380.10">
    <property type="match status" value="1"/>
</dbReference>
<dbReference type="Gene3D" id="1.10.287.80">
    <property type="entry name" value="ATP synthase, gamma subunit, helix hairpin domain"/>
    <property type="match status" value="1"/>
</dbReference>
<dbReference type="HAMAP" id="MF_00815">
    <property type="entry name" value="ATP_synth_gamma_bact"/>
    <property type="match status" value="1"/>
</dbReference>
<dbReference type="InterPro" id="IPR035968">
    <property type="entry name" value="ATP_synth_F1_ATPase_gsu"/>
</dbReference>
<dbReference type="InterPro" id="IPR000131">
    <property type="entry name" value="ATP_synth_F1_gsu"/>
</dbReference>
<dbReference type="InterPro" id="IPR023632">
    <property type="entry name" value="ATP_synth_F1_gsu_CS"/>
</dbReference>
<dbReference type="NCBIfam" id="TIGR01146">
    <property type="entry name" value="ATPsyn_F1gamma"/>
    <property type="match status" value="1"/>
</dbReference>
<dbReference type="NCBIfam" id="NF004145">
    <property type="entry name" value="PRK05621.1-2"/>
    <property type="match status" value="1"/>
</dbReference>
<dbReference type="PANTHER" id="PTHR11693">
    <property type="entry name" value="ATP SYNTHASE GAMMA CHAIN"/>
    <property type="match status" value="1"/>
</dbReference>
<dbReference type="PANTHER" id="PTHR11693:SF22">
    <property type="entry name" value="ATP SYNTHASE SUBUNIT GAMMA, MITOCHONDRIAL"/>
    <property type="match status" value="1"/>
</dbReference>
<dbReference type="Pfam" id="PF00231">
    <property type="entry name" value="ATP-synt"/>
    <property type="match status" value="1"/>
</dbReference>
<dbReference type="PRINTS" id="PR00126">
    <property type="entry name" value="ATPASEGAMMA"/>
</dbReference>
<dbReference type="SUPFAM" id="SSF52943">
    <property type="entry name" value="ATP synthase (F1-ATPase), gamma subunit"/>
    <property type="match status" value="1"/>
</dbReference>
<dbReference type="PROSITE" id="PS00153">
    <property type="entry name" value="ATPASE_GAMMA"/>
    <property type="match status" value="1"/>
</dbReference>